<proteinExistence type="evidence at protein level"/>
<sequence length="730" mass="81793">MYSTNPGSWVTFDDDPAFQSSQKRKDFSLETQGVCRPNGLKLTLPTLRDPPSTPSSASSTPLSSPMVDFYFSPGPPSNSPLSTPTKDFPGFPGIPKAGTHVLYPIPECSSSSAPTTAGGVGPPLLLTKPDCSPHVSLPSSHSHTQPTPTLGFTEDAGPQRVQSEARQFEYFQDHCAFSNPFWKDEGSASPFPLDSLASRKPFSPKDKEVPIGHKSLTQCSLDYICEKLEHLHSAETQDPLGDLSMQDPYAGDTVSFVPHSLFRSQPRAGWSFMLRIPEKKNMMSSRQWGPIFLKVLPGGILQMYYEKGLEKPFKEFQLDPHCRLSEPKLENFSMAGKIHTVKVEHVSYSEKRKYHAKTEVVHEPEVEQMLKLGSTEHRDFLEFLTTVEEELIKLPATAKPKNKSYEEQEICLDIQDSLWGKVTKEGQLVESAVVTQICCLCFLNGPAECFLALNDRELQKRDECYFEKEPEKKGIAILDYHFHTCVKAEEFEQSRIIKFVPLDACRFELMRFKTSYEAGELPFAVKSVVTVQGAYVELQAFVNMTPAAQGSPHAGALRSCNNIMIHFPVPAQWIKALWTRNLQRQKSLKAKMNRRACLGSLQEPESEPVIQVTVGSAKYESAYRAVVWKIDRLPDKNSSPDQPHCLSYKLELGSDQEVPSDWYPFATVQFSMLEACASRTEVRSLGVESDAQPQKHVCQRACYNIQVEIEKKWIQVDGEDADKTGGCVTQ</sequence>
<dbReference type="EMBL" id="AK014958">
    <property type="protein sequence ID" value="BAB29639.1"/>
    <property type="molecule type" value="mRNA"/>
</dbReference>
<dbReference type="EMBL" id="AK029878">
    <property type="protein sequence ID" value="BAC26656.1"/>
    <property type="molecule type" value="mRNA"/>
</dbReference>
<dbReference type="EMBL" id="AK029959">
    <property type="protein sequence ID" value="BAC26699.1"/>
    <property type="molecule type" value="mRNA"/>
</dbReference>
<dbReference type="CCDS" id="CCDS50207.1"/>
<dbReference type="RefSeq" id="NP_084134.2">
    <property type="nucleotide sequence ID" value="NM_029858.2"/>
</dbReference>
<dbReference type="RefSeq" id="XP_006525174.1">
    <property type="nucleotide sequence ID" value="XM_006525111.3"/>
</dbReference>
<dbReference type="RefSeq" id="XP_006525175.1">
    <property type="nucleotide sequence ID" value="XM_006525112.5"/>
</dbReference>
<dbReference type="FunCoup" id="Q8CDJ8">
    <property type="interactions" value="130"/>
</dbReference>
<dbReference type="IntAct" id="Q8CDJ8">
    <property type="interactions" value="1"/>
</dbReference>
<dbReference type="STRING" id="10090.ENSMUSP00000067027"/>
<dbReference type="GlyGen" id="Q8CDJ8">
    <property type="glycosylation" value="2 sites, 1 O-linked glycan (1 site)"/>
</dbReference>
<dbReference type="iPTMnet" id="Q8CDJ8"/>
<dbReference type="PhosphoSitePlus" id="Q8CDJ8"/>
<dbReference type="SwissPalm" id="Q8CDJ8"/>
<dbReference type="PaxDb" id="10090-ENSMUSP00000067027"/>
<dbReference type="PeptideAtlas" id="Q8CDJ8"/>
<dbReference type="ProteomicsDB" id="257497"/>
<dbReference type="Pumba" id="Q8CDJ8"/>
<dbReference type="DNASU" id="77057"/>
<dbReference type="Ensembl" id="ENSMUST00000064035.13">
    <property type="protein sequence ID" value="ENSMUSP00000067027.7"/>
    <property type="gene ID" value="ENSMUSG00000033855.16"/>
</dbReference>
<dbReference type="Ensembl" id="ENSMUST00000150023.2">
    <property type="protein sequence ID" value="ENSMUSP00000122928.2"/>
    <property type="gene ID" value="ENSMUSG00000033855.16"/>
</dbReference>
<dbReference type="Ensembl" id="ENSMUST00000163588.8">
    <property type="protein sequence ID" value="ENSMUSP00000131703.2"/>
    <property type="gene ID" value="ENSMUSG00000033855.16"/>
</dbReference>
<dbReference type="GeneID" id="77057"/>
<dbReference type="KEGG" id="mmu:77057"/>
<dbReference type="UCSC" id="uc012ayo.1">
    <property type="organism name" value="mouse"/>
</dbReference>
<dbReference type="AGR" id="MGI:1924307"/>
<dbReference type="CTD" id="11037"/>
<dbReference type="MGI" id="MGI:1924307">
    <property type="gene designation" value="Ston1"/>
</dbReference>
<dbReference type="VEuPathDB" id="HostDB:ENSMUSG00000033855"/>
<dbReference type="eggNOG" id="KOG2677">
    <property type="taxonomic scope" value="Eukaryota"/>
</dbReference>
<dbReference type="GeneTree" id="ENSGT00940000158817"/>
<dbReference type="HOGENOM" id="CLU_016541_0_0_1"/>
<dbReference type="InParanoid" id="Q8CDJ8"/>
<dbReference type="OMA" id="PIRDTSW"/>
<dbReference type="OrthoDB" id="10063141at2759"/>
<dbReference type="PhylomeDB" id="Q8CDJ8"/>
<dbReference type="TreeFam" id="TF318623"/>
<dbReference type="Reactome" id="R-MMU-8856825">
    <property type="pathway name" value="Cargo recognition for clathrin-mediated endocytosis"/>
</dbReference>
<dbReference type="Reactome" id="R-MMU-8856828">
    <property type="pathway name" value="Clathrin-mediated endocytosis"/>
</dbReference>
<dbReference type="BioGRID-ORCS" id="77057">
    <property type="hits" value="3 hits in 77 CRISPR screens"/>
</dbReference>
<dbReference type="ChiTaRS" id="Ston1">
    <property type="organism name" value="mouse"/>
</dbReference>
<dbReference type="PRO" id="PR:Q8CDJ8"/>
<dbReference type="Proteomes" id="UP000000589">
    <property type="component" value="Chromosome 17"/>
</dbReference>
<dbReference type="RNAct" id="Q8CDJ8">
    <property type="molecule type" value="protein"/>
</dbReference>
<dbReference type="Bgee" id="ENSMUSG00000033855">
    <property type="expression patterns" value="Expressed in undifferentiated genital tubercle and 80 other cell types or tissues"/>
</dbReference>
<dbReference type="ExpressionAtlas" id="Q8CDJ8">
    <property type="expression patterns" value="baseline and differential"/>
</dbReference>
<dbReference type="GO" id="GO:0031252">
    <property type="term" value="C:cell leading edge"/>
    <property type="evidence" value="ECO:0000314"/>
    <property type="project" value="MGI"/>
</dbReference>
<dbReference type="GO" id="GO:0042995">
    <property type="term" value="C:cell projection"/>
    <property type="evidence" value="ECO:0000314"/>
    <property type="project" value="MGI"/>
</dbReference>
<dbReference type="GO" id="GO:0005905">
    <property type="term" value="C:clathrin-coated pit"/>
    <property type="evidence" value="ECO:0000314"/>
    <property type="project" value="MGI"/>
</dbReference>
<dbReference type="GO" id="GO:0005737">
    <property type="term" value="C:cytoplasm"/>
    <property type="evidence" value="ECO:0007669"/>
    <property type="project" value="UniProtKB-SubCell"/>
</dbReference>
<dbReference type="GO" id="GO:0140312">
    <property type="term" value="F:cargo adaptor activity"/>
    <property type="evidence" value="ECO:0000314"/>
    <property type="project" value="MGI"/>
</dbReference>
<dbReference type="GO" id="GO:0006897">
    <property type="term" value="P:endocytosis"/>
    <property type="evidence" value="ECO:0000314"/>
    <property type="project" value="MGI"/>
</dbReference>
<dbReference type="GO" id="GO:0048041">
    <property type="term" value="P:focal adhesion assembly"/>
    <property type="evidence" value="ECO:0000315"/>
    <property type="project" value="MGI"/>
</dbReference>
<dbReference type="GO" id="GO:0120181">
    <property type="term" value="P:focal adhesion disassembly"/>
    <property type="evidence" value="ECO:0000315"/>
    <property type="project" value="MGI"/>
</dbReference>
<dbReference type="GO" id="GO:0048008">
    <property type="term" value="P:platelet-derived growth factor receptor signaling pathway"/>
    <property type="evidence" value="ECO:0000315"/>
    <property type="project" value="MGI"/>
</dbReference>
<dbReference type="GO" id="GO:0030100">
    <property type="term" value="P:regulation of endocytosis"/>
    <property type="evidence" value="ECO:0000250"/>
    <property type="project" value="UniProtKB"/>
</dbReference>
<dbReference type="GO" id="GO:0097178">
    <property type="term" value="P:ruffle assembly"/>
    <property type="evidence" value="ECO:0000315"/>
    <property type="project" value="MGI"/>
</dbReference>
<dbReference type="GO" id="GO:0006929">
    <property type="term" value="P:substrate-dependent cell migration"/>
    <property type="evidence" value="ECO:0000315"/>
    <property type="project" value="MGI"/>
</dbReference>
<dbReference type="FunFam" id="2.60.40.1170:FF:000017">
    <property type="entry name" value="stonin-1 isoform X2"/>
    <property type="match status" value="1"/>
</dbReference>
<dbReference type="Gene3D" id="2.60.40.1170">
    <property type="entry name" value="Mu homology domain, subdomain B"/>
    <property type="match status" value="2"/>
</dbReference>
<dbReference type="InterPro" id="IPR050431">
    <property type="entry name" value="Adaptor_comp_med_subunit"/>
</dbReference>
<dbReference type="InterPro" id="IPR036168">
    <property type="entry name" value="AP2_Mu_C_sf"/>
</dbReference>
<dbReference type="InterPro" id="IPR028565">
    <property type="entry name" value="MHD"/>
</dbReference>
<dbReference type="InterPro" id="IPR012320">
    <property type="entry name" value="SHD_dom"/>
</dbReference>
<dbReference type="InterPro" id="IPR017110">
    <property type="entry name" value="Stonin"/>
</dbReference>
<dbReference type="PANTHER" id="PTHR10529">
    <property type="entry name" value="AP COMPLEX SUBUNIT MU"/>
    <property type="match status" value="1"/>
</dbReference>
<dbReference type="Pfam" id="PF00928">
    <property type="entry name" value="Adap_comp_sub"/>
    <property type="match status" value="1"/>
</dbReference>
<dbReference type="PIRSF" id="PIRSF037099">
    <property type="entry name" value="Stonin"/>
    <property type="match status" value="1"/>
</dbReference>
<dbReference type="SUPFAM" id="SSF49447">
    <property type="entry name" value="Second domain of Mu2 adaptin subunit (ap50) of ap2 adaptor"/>
    <property type="match status" value="1"/>
</dbReference>
<dbReference type="PROSITE" id="PS51072">
    <property type="entry name" value="MHD"/>
    <property type="match status" value="1"/>
</dbReference>
<dbReference type="PROSITE" id="PS51070">
    <property type="entry name" value="SHD"/>
    <property type="match status" value="1"/>
</dbReference>
<protein>
    <recommendedName>
        <fullName>Stonin-1</fullName>
    </recommendedName>
    <alternativeName>
        <fullName>Stoned B-like factor</fullName>
    </alternativeName>
</protein>
<gene>
    <name type="primary">Ston1</name>
    <name type="synonym">Salf</name>
    <name type="synonym">Sblf</name>
    <name type="synonym">Stn1</name>
</gene>
<accession>Q8CDJ8</accession>
<accession>Q8CDL8</accession>
<accession>Q9D5T3</accession>
<comment type="function">
    <text evidence="1">May be involved in the endocytic machinery.</text>
</comment>
<comment type="subcellular location">
    <subcellularLocation>
        <location evidence="1">Cytoplasm</location>
    </subcellularLocation>
    <subcellularLocation>
        <location evidence="1">Membrane</location>
    </subcellularLocation>
    <text evidence="1">Some fraction is membrane-associated.</text>
</comment>
<comment type="miscellaneous">
    <text evidence="1">In contrast to other members of the family, it does not contain NPF (Asn-Pro-Phe) sites and thereby does not interact with EPS15, EPS15R and ITSN1.</text>
</comment>
<comment type="similarity">
    <text evidence="5">Belongs to the Stoned B family.</text>
</comment>
<keyword id="KW-0963">Cytoplasm</keyword>
<keyword id="KW-0254">Endocytosis</keyword>
<keyword id="KW-0472">Membrane</keyword>
<keyword id="KW-1185">Reference proteome</keyword>
<organism>
    <name type="scientific">Mus musculus</name>
    <name type="common">Mouse</name>
    <dbReference type="NCBI Taxonomy" id="10090"/>
    <lineage>
        <taxon>Eukaryota</taxon>
        <taxon>Metazoa</taxon>
        <taxon>Chordata</taxon>
        <taxon>Craniata</taxon>
        <taxon>Vertebrata</taxon>
        <taxon>Euteleostomi</taxon>
        <taxon>Mammalia</taxon>
        <taxon>Eutheria</taxon>
        <taxon>Euarchontoglires</taxon>
        <taxon>Glires</taxon>
        <taxon>Rodentia</taxon>
        <taxon>Myomorpha</taxon>
        <taxon>Muroidea</taxon>
        <taxon>Muridae</taxon>
        <taxon>Murinae</taxon>
        <taxon>Mus</taxon>
        <taxon>Mus</taxon>
    </lineage>
</organism>
<reference key="1">
    <citation type="journal article" date="2005" name="Science">
        <title>The transcriptional landscape of the mammalian genome.</title>
        <authorList>
            <person name="Carninci P."/>
            <person name="Kasukawa T."/>
            <person name="Katayama S."/>
            <person name="Gough J."/>
            <person name="Frith M.C."/>
            <person name="Maeda N."/>
            <person name="Oyama R."/>
            <person name="Ravasi T."/>
            <person name="Lenhard B."/>
            <person name="Wells C."/>
            <person name="Kodzius R."/>
            <person name="Shimokawa K."/>
            <person name="Bajic V.B."/>
            <person name="Brenner S.E."/>
            <person name="Batalov S."/>
            <person name="Forrest A.R."/>
            <person name="Zavolan M."/>
            <person name="Davis M.J."/>
            <person name="Wilming L.G."/>
            <person name="Aidinis V."/>
            <person name="Allen J.E."/>
            <person name="Ambesi-Impiombato A."/>
            <person name="Apweiler R."/>
            <person name="Aturaliya R.N."/>
            <person name="Bailey T.L."/>
            <person name="Bansal M."/>
            <person name="Baxter L."/>
            <person name="Beisel K.W."/>
            <person name="Bersano T."/>
            <person name="Bono H."/>
            <person name="Chalk A.M."/>
            <person name="Chiu K.P."/>
            <person name="Choudhary V."/>
            <person name="Christoffels A."/>
            <person name="Clutterbuck D.R."/>
            <person name="Crowe M.L."/>
            <person name="Dalla E."/>
            <person name="Dalrymple B.P."/>
            <person name="de Bono B."/>
            <person name="Della Gatta G."/>
            <person name="di Bernardo D."/>
            <person name="Down T."/>
            <person name="Engstrom P."/>
            <person name="Fagiolini M."/>
            <person name="Faulkner G."/>
            <person name="Fletcher C.F."/>
            <person name="Fukushima T."/>
            <person name="Furuno M."/>
            <person name="Futaki S."/>
            <person name="Gariboldi M."/>
            <person name="Georgii-Hemming P."/>
            <person name="Gingeras T.R."/>
            <person name="Gojobori T."/>
            <person name="Green R.E."/>
            <person name="Gustincich S."/>
            <person name="Harbers M."/>
            <person name="Hayashi Y."/>
            <person name="Hensch T.K."/>
            <person name="Hirokawa N."/>
            <person name="Hill D."/>
            <person name="Huminiecki L."/>
            <person name="Iacono M."/>
            <person name="Ikeo K."/>
            <person name="Iwama A."/>
            <person name="Ishikawa T."/>
            <person name="Jakt M."/>
            <person name="Kanapin A."/>
            <person name="Katoh M."/>
            <person name="Kawasawa Y."/>
            <person name="Kelso J."/>
            <person name="Kitamura H."/>
            <person name="Kitano H."/>
            <person name="Kollias G."/>
            <person name="Krishnan S.P."/>
            <person name="Kruger A."/>
            <person name="Kummerfeld S.K."/>
            <person name="Kurochkin I.V."/>
            <person name="Lareau L.F."/>
            <person name="Lazarevic D."/>
            <person name="Lipovich L."/>
            <person name="Liu J."/>
            <person name="Liuni S."/>
            <person name="McWilliam S."/>
            <person name="Madan Babu M."/>
            <person name="Madera M."/>
            <person name="Marchionni L."/>
            <person name="Matsuda H."/>
            <person name="Matsuzawa S."/>
            <person name="Miki H."/>
            <person name="Mignone F."/>
            <person name="Miyake S."/>
            <person name="Morris K."/>
            <person name="Mottagui-Tabar S."/>
            <person name="Mulder N."/>
            <person name="Nakano N."/>
            <person name="Nakauchi H."/>
            <person name="Ng P."/>
            <person name="Nilsson R."/>
            <person name="Nishiguchi S."/>
            <person name="Nishikawa S."/>
            <person name="Nori F."/>
            <person name="Ohara O."/>
            <person name="Okazaki Y."/>
            <person name="Orlando V."/>
            <person name="Pang K.C."/>
            <person name="Pavan W.J."/>
            <person name="Pavesi G."/>
            <person name="Pesole G."/>
            <person name="Petrovsky N."/>
            <person name="Piazza S."/>
            <person name="Reed J."/>
            <person name="Reid J.F."/>
            <person name="Ring B.Z."/>
            <person name="Ringwald M."/>
            <person name="Rost B."/>
            <person name="Ruan Y."/>
            <person name="Salzberg S.L."/>
            <person name="Sandelin A."/>
            <person name="Schneider C."/>
            <person name="Schoenbach C."/>
            <person name="Sekiguchi K."/>
            <person name="Semple C.A."/>
            <person name="Seno S."/>
            <person name="Sessa L."/>
            <person name="Sheng Y."/>
            <person name="Shibata Y."/>
            <person name="Shimada H."/>
            <person name="Shimada K."/>
            <person name="Silva D."/>
            <person name="Sinclair B."/>
            <person name="Sperling S."/>
            <person name="Stupka E."/>
            <person name="Sugiura K."/>
            <person name="Sultana R."/>
            <person name="Takenaka Y."/>
            <person name="Taki K."/>
            <person name="Tammoja K."/>
            <person name="Tan S.L."/>
            <person name="Tang S."/>
            <person name="Taylor M.S."/>
            <person name="Tegner J."/>
            <person name="Teichmann S.A."/>
            <person name="Ueda H.R."/>
            <person name="van Nimwegen E."/>
            <person name="Verardo R."/>
            <person name="Wei C.L."/>
            <person name="Yagi K."/>
            <person name="Yamanishi H."/>
            <person name="Zabarovsky E."/>
            <person name="Zhu S."/>
            <person name="Zimmer A."/>
            <person name="Hide W."/>
            <person name="Bult C."/>
            <person name="Grimmond S.M."/>
            <person name="Teasdale R.D."/>
            <person name="Liu E.T."/>
            <person name="Brusic V."/>
            <person name="Quackenbush J."/>
            <person name="Wahlestedt C."/>
            <person name="Mattick J.S."/>
            <person name="Hume D.A."/>
            <person name="Kai C."/>
            <person name="Sasaki D."/>
            <person name="Tomaru Y."/>
            <person name="Fukuda S."/>
            <person name="Kanamori-Katayama M."/>
            <person name="Suzuki M."/>
            <person name="Aoki J."/>
            <person name="Arakawa T."/>
            <person name="Iida J."/>
            <person name="Imamura K."/>
            <person name="Itoh M."/>
            <person name="Kato T."/>
            <person name="Kawaji H."/>
            <person name="Kawagashira N."/>
            <person name="Kawashima T."/>
            <person name="Kojima M."/>
            <person name="Kondo S."/>
            <person name="Konno H."/>
            <person name="Nakano K."/>
            <person name="Ninomiya N."/>
            <person name="Nishio T."/>
            <person name="Okada M."/>
            <person name="Plessy C."/>
            <person name="Shibata K."/>
            <person name="Shiraki T."/>
            <person name="Suzuki S."/>
            <person name="Tagami M."/>
            <person name="Waki K."/>
            <person name="Watahiki A."/>
            <person name="Okamura-Oho Y."/>
            <person name="Suzuki H."/>
            <person name="Kawai J."/>
            <person name="Hayashizaki Y."/>
        </authorList>
    </citation>
    <scope>NUCLEOTIDE SEQUENCE [LARGE SCALE MRNA]</scope>
    <source>
        <strain>C57BL/6J</strain>
        <tissue>Testis</tissue>
    </source>
</reference>
<reference key="2">
    <citation type="journal article" date="2010" name="Cell">
        <title>A tissue-specific atlas of mouse protein phosphorylation and expression.</title>
        <authorList>
            <person name="Huttlin E.L."/>
            <person name="Jedrychowski M.P."/>
            <person name="Elias J.E."/>
            <person name="Goswami T."/>
            <person name="Rad R."/>
            <person name="Beausoleil S.A."/>
            <person name="Villen J."/>
            <person name="Haas W."/>
            <person name="Sowa M.E."/>
            <person name="Gygi S.P."/>
        </authorList>
    </citation>
    <scope>IDENTIFICATION BY MASS SPECTROMETRY [LARGE SCALE ANALYSIS]</scope>
    <source>
        <tissue>Lung</tissue>
    </source>
</reference>
<evidence type="ECO:0000250" key="1"/>
<evidence type="ECO:0000255" key="2">
    <source>
        <dbReference type="PROSITE-ProRule" id="PRU00403"/>
    </source>
</evidence>
<evidence type="ECO:0000255" key="3">
    <source>
        <dbReference type="PROSITE-ProRule" id="PRU00404"/>
    </source>
</evidence>
<evidence type="ECO:0000256" key="4">
    <source>
        <dbReference type="SAM" id="MobiDB-lite"/>
    </source>
</evidence>
<evidence type="ECO:0000305" key="5"/>
<feature type="chain" id="PRO_0000185737" description="Stonin-1">
    <location>
        <begin position="1"/>
        <end position="730"/>
    </location>
</feature>
<feature type="domain" description="SHD" evidence="2">
    <location>
        <begin position="269"/>
        <end position="402"/>
    </location>
</feature>
<feature type="domain" description="MHD" evidence="3">
    <location>
        <begin position="407"/>
        <end position="710"/>
    </location>
</feature>
<feature type="region of interest" description="Disordered" evidence="4">
    <location>
        <begin position="1"/>
        <end position="26"/>
    </location>
</feature>
<feature type="region of interest" description="Disordered" evidence="4">
    <location>
        <begin position="38"/>
        <end position="83"/>
    </location>
</feature>
<feature type="region of interest" description="Disordered" evidence="4">
    <location>
        <begin position="132"/>
        <end position="159"/>
    </location>
</feature>
<feature type="compositionally biased region" description="Low complexity" evidence="4">
    <location>
        <begin position="54"/>
        <end position="65"/>
    </location>
</feature>
<feature type="compositionally biased region" description="Low complexity" evidence="4">
    <location>
        <begin position="132"/>
        <end position="143"/>
    </location>
</feature>
<feature type="sequence conflict" description="In Ref. 1; BAC26699." evidence="5" ref="1">
    <original>E</original>
    <variation>V</variation>
    <location>
        <position position="278"/>
    </location>
</feature>
<feature type="sequence conflict" description="In Ref. 1; BAC26699." evidence="5" ref="1">
    <original>C</original>
    <variation>F</variation>
    <location>
        <position position="322"/>
    </location>
</feature>
<feature type="sequence conflict" description="In Ref. 1; BAB29639." evidence="5" ref="1">
    <original>E</original>
    <variation>D</variation>
    <location>
        <position position="603"/>
    </location>
</feature>
<name>STON1_MOUSE</name>